<protein>
    <recommendedName>
        <fullName>Lutropin/choriogonadotropin subunit beta</fullName>
    </recommendedName>
    <alternativeName>
        <fullName>LSH-B/CG-B</fullName>
    </alternativeName>
    <alternativeName>
        <fullName>Luteinizing hormone subunit beta</fullName>
    </alternativeName>
    <alternativeName>
        <fullName>Lutropin/choriogonadotropin beta chain</fullName>
    </alternativeName>
</protein>
<dbReference type="EMBL" id="S41704">
    <property type="protein sequence ID" value="AAB22775.1"/>
    <property type="molecule type" value="Genomic_DNA"/>
</dbReference>
<dbReference type="PIR" id="A41917">
    <property type="entry name" value="KTHOB"/>
</dbReference>
<dbReference type="RefSeq" id="NP_001184022.1">
    <property type="nucleotide sequence ID" value="NM_001197093.2"/>
</dbReference>
<dbReference type="SMR" id="P08751"/>
<dbReference type="FunCoup" id="P08751">
    <property type="interactions" value="160"/>
</dbReference>
<dbReference type="STRING" id="9796.ENSECAP00000005559"/>
<dbReference type="GlyConnect" id="90">
    <property type="glycosylation" value="5 N-Linked glycans, 9 O-Linked glycans"/>
</dbReference>
<dbReference type="GlyCosmos" id="P08751">
    <property type="glycosylation" value="13 sites, 23 glycans"/>
</dbReference>
<dbReference type="iPTMnet" id="P08751"/>
<dbReference type="PaxDb" id="9796-ENSECAP00000005559"/>
<dbReference type="GeneID" id="100054774"/>
<dbReference type="KEGG" id="ecb:100054774"/>
<dbReference type="CTD" id="3972"/>
<dbReference type="InParanoid" id="P08751"/>
<dbReference type="OMA" id="FYIQAKN"/>
<dbReference type="OrthoDB" id="8453657at2759"/>
<dbReference type="Proteomes" id="UP000002281">
    <property type="component" value="Chromosome 10"/>
</dbReference>
<dbReference type="Bgee" id="ENSECAG00000007548">
    <property type="expression patterns" value="Expressed in trophoblast and 21 other cell types or tissues"/>
</dbReference>
<dbReference type="GO" id="GO:0005737">
    <property type="term" value="C:cytoplasm"/>
    <property type="evidence" value="ECO:0000318"/>
    <property type="project" value="GO_Central"/>
</dbReference>
<dbReference type="GO" id="GO:0005615">
    <property type="term" value="C:extracellular space"/>
    <property type="evidence" value="ECO:0000318"/>
    <property type="project" value="GO_Central"/>
</dbReference>
<dbReference type="GO" id="GO:0005179">
    <property type="term" value="F:hormone activity"/>
    <property type="evidence" value="ECO:0007669"/>
    <property type="project" value="UniProtKB-KW"/>
</dbReference>
<dbReference type="GO" id="GO:0007186">
    <property type="term" value="P:G protein-coupled receptor signaling pathway"/>
    <property type="evidence" value="ECO:0000318"/>
    <property type="project" value="GO_Central"/>
</dbReference>
<dbReference type="CDD" id="cd00069">
    <property type="entry name" value="GHB_like"/>
    <property type="match status" value="1"/>
</dbReference>
<dbReference type="FunFam" id="2.10.90.10:FF:000007">
    <property type="entry name" value="Luteinizing hormone beta subunit"/>
    <property type="match status" value="1"/>
</dbReference>
<dbReference type="Gene3D" id="2.10.90.10">
    <property type="entry name" value="Cystine-knot cytokines"/>
    <property type="match status" value="1"/>
</dbReference>
<dbReference type="InterPro" id="IPR029034">
    <property type="entry name" value="Cystine-knot_cytokine"/>
</dbReference>
<dbReference type="InterPro" id="IPR006208">
    <property type="entry name" value="Glyco_hormone_CN"/>
</dbReference>
<dbReference type="InterPro" id="IPR001545">
    <property type="entry name" value="Gonadotropin_bsu"/>
</dbReference>
<dbReference type="InterPro" id="IPR018245">
    <property type="entry name" value="Gonadotropin_bsu_CS"/>
</dbReference>
<dbReference type="PANTHER" id="PTHR11515">
    <property type="entry name" value="GLYCOPROTEIN HORMONE BETA CHAIN"/>
    <property type="match status" value="1"/>
</dbReference>
<dbReference type="PANTHER" id="PTHR11515:SF11">
    <property type="entry name" value="LUTROPIN SUBUNIT BETA"/>
    <property type="match status" value="1"/>
</dbReference>
<dbReference type="Pfam" id="PF00007">
    <property type="entry name" value="Cys_knot"/>
    <property type="match status" value="1"/>
</dbReference>
<dbReference type="SMART" id="SM00068">
    <property type="entry name" value="GHB"/>
    <property type="match status" value="1"/>
</dbReference>
<dbReference type="SUPFAM" id="SSF57501">
    <property type="entry name" value="Cystine-knot cytokines"/>
    <property type="match status" value="1"/>
</dbReference>
<dbReference type="PROSITE" id="PS00261">
    <property type="entry name" value="GLYCO_HORMONE_BETA_1"/>
    <property type="match status" value="1"/>
</dbReference>
<dbReference type="PROSITE" id="PS00689">
    <property type="entry name" value="GLYCO_HORMONE_BETA_2"/>
    <property type="match status" value="1"/>
</dbReference>
<keyword id="KW-0903">Direct protein sequencing</keyword>
<keyword id="KW-1015">Disulfide bond</keyword>
<keyword id="KW-0325">Glycoprotein</keyword>
<keyword id="KW-0372">Hormone</keyword>
<keyword id="KW-1185">Reference proteome</keyword>
<keyword id="KW-0964">Secreted</keyword>
<keyword id="KW-0732">Signal</keyword>
<sequence>METLQGLLLWMLLSVGGVWASRGPLRPLCRPINATLAAEKEACPICITFTTSICAGYCPSMVRVMPAALPAIPQPVCTYRELRFASIRLPGCPPGVDPMVSFPVALSCHCGPCQIKTTDCGVFRDQPLACAPQASSSSKDPPSQPLTSTSTPTPGASRRSSHPLPIKTS</sequence>
<feature type="signal peptide" evidence="4 5">
    <location>
        <begin position="1"/>
        <end position="20"/>
    </location>
</feature>
<feature type="chain" id="PRO_0000011725" description="Lutropin/choriogonadotropin subunit beta">
    <location>
        <begin position="21"/>
        <end position="169"/>
    </location>
</feature>
<feature type="region of interest" description="Disordered" evidence="2">
    <location>
        <begin position="131"/>
        <end position="169"/>
    </location>
</feature>
<feature type="compositionally biased region" description="Low complexity" evidence="2">
    <location>
        <begin position="145"/>
        <end position="158"/>
    </location>
</feature>
<feature type="glycosylation site" description="N-linked (GlcNAc...) asparagine" evidence="4">
    <location>
        <position position="33"/>
    </location>
</feature>
<feature type="glycosylation site" description="O-linked (GalNAc...) serine" evidence="3">
    <location>
        <position position="138"/>
    </location>
</feature>
<feature type="glycosylation site" description="O-linked (GalNAc...) serine" evidence="3">
    <location>
        <position position="143"/>
    </location>
</feature>
<feature type="glycosylation site" description="O-linked (GalNAc...) threonine" evidence="3">
    <location>
        <position position="147"/>
    </location>
</feature>
<feature type="glycosylation site" description="O-linked (GalNAc...) serine" evidence="3">
    <location>
        <position position="148"/>
    </location>
</feature>
<feature type="glycosylation site" description="O-linked (GalNAc...) threonine" evidence="3">
    <location>
        <position position="149"/>
    </location>
</feature>
<feature type="glycosylation site" description="O-linked (GalNAc...) serine" evidence="3">
    <location>
        <position position="150"/>
    </location>
</feature>
<feature type="glycosylation site" description="O-linked (GalNAc...) threonine" evidence="3">
    <location>
        <position position="151"/>
    </location>
</feature>
<feature type="glycosylation site" description="O-linked (GalNAc...) threonine" evidence="3">
    <location>
        <position position="153"/>
    </location>
</feature>
<feature type="glycosylation site" description="O-linked (GalNAc...) serine" evidence="3">
    <location>
        <position position="157"/>
    </location>
</feature>
<feature type="glycosylation site" description="O-linked (GalNAc...) serine" evidence="3">
    <location>
        <position position="160"/>
    </location>
</feature>
<feature type="glycosylation site" description="O-linked (GalNAc...) serine" evidence="3">
    <location>
        <position position="161"/>
    </location>
</feature>
<feature type="glycosylation site" description="O-linked (GalNAc...) serine" evidence="3">
    <location>
        <position position="169"/>
    </location>
</feature>
<feature type="disulfide bond" evidence="1">
    <location>
        <begin position="29"/>
        <end position="77"/>
    </location>
</feature>
<feature type="disulfide bond" evidence="1">
    <location>
        <begin position="43"/>
        <end position="92"/>
    </location>
</feature>
<feature type="disulfide bond" evidence="1">
    <location>
        <begin position="46"/>
        <end position="130"/>
    </location>
</feature>
<feature type="disulfide bond" evidence="1">
    <location>
        <begin position="54"/>
        <end position="108"/>
    </location>
</feature>
<feature type="disulfide bond" evidence="1">
    <location>
        <begin position="58"/>
        <end position="110"/>
    </location>
</feature>
<feature type="disulfide bond" evidence="1">
    <location>
        <begin position="113"/>
        <end position="120"/>
    </location>
</feature>
<gene>
    <name type="primary">LHB</name>
</gene>
<organism>
    <name type="scientific">Equus caballus</name>
    <name type="common">Horse</name>
    <dbReference type="NCBI Taxonomy" id="9796"/>
    <lineage>
        <taxon>Eukaryota</taxon>
        <taxon>Metazoa</taxon>
        <taxon>Chordata</taxon>
        <taxon>Craniata</taxon>
        <taxon>Vertebrata</taxon>
        <taxon>Euteleostomi</taxon>
        <taxon>Mammalia</taxon>
        <taxon>Eutheria</taxon>
        <taxon>Laurasiatheria</taxon>
        <taxon>Perissodactyla</taxon>
        <taxon>Equidae</taxon>
        <taxon>Equus</taxon>
    </lineage>
</organism>
<reference key="1">
    <citation type="journal article" date="1992" name="Mol. Endocrinol.">
        <title>A single gene encodes the beta-subunits of equine luteinizing hormone and chorionic gonadotropin.</title>
        <authorList>
            <person name="Sherman G.B."/>
            <person name="Wolfe M.W."/>
            <person name="Farmerie T.A."/>
            <person name="Clay C.M."/>
            <person name="Threadgill D.S."/>
            <person name="Sharp D.C."/>
            <person name="Nilson J.H."/>
        </authorList>
    </citation>
    <scope>NUCLEOTIDE SEQUENCE [GENOMIC DNA]</scope>
</reference>
<reference key="2">
    <citation type="journal article" date="1987" name="J. Biol. Chem.">
        <title>Structural studies on equine glycoprotein hormones. Amino acid sequence of equine lutropin beta-subunit.</title>
        <authorList>
            <person name="Bousfield G.R."/>
            <person name="Liu W.-K."/>
            <person name="Sugino H."/>
            <person name="Ward D.N."/>
        </authorList>
    </citation>
    <scope>PROTEIN SEQUENCE OF 21-169</scope>
</reference>
<reference key="3">
    <citation type="journal article" date="1987" name="J. Biol. Chem.">
        <title>Structural studies on equine glycoprotein hormones. Amino acid sequence of equine chorionic gonadotropin beta-subunit.</title>
        <authorList>
            <person name="Sugino H."/>
            <person name="Bousfield G.R."/>
            <person name="Moore W.T. Jr."/>
            <person name="Ward D.N."/>
        </authorList>
    </citation>
    <scope>PROTEIN SEQUENCE OF 21-169</scope>
</reference>
<reference key="4">
    <citation type="journal article" date="1982" name="J. Protein Chem.">
        <title>Structural studies on equine chorionic gonadotropin.</title>
        <authorList>
            <person name="Ward D.N."/>
            <person name="Moore W.T. Jr."/>
            <person name="Burleigh B.D."/>
        </authorList>
    </citation>
    <scope>PARTIAL PROTEIN SEQUENCE</scope>
</reference>
<reference key="5">
    <citation type="journal article" date="1990" name="Eur. J. Biochem.">
        <title>Structure determination of the major N- and O-linked carbohydrate chains of the beta subunit from equine chorionic gonadotropin.</title>
        <authorList>
            <person name="Damm J.B.L."/>
            <person name="Haard K."/>
            <person name="Kamerling J.P."/>
            <person name="van Dedem G.W.K."/>
            <person name="Vliegenthart J.F.G."/>
        </authorList>
    </citation>
    <scope>STRUCTURE OF CARBOHYDRATES</scope>
</reference>
<reference key="6">
    <citation type="journal article" date="2001" name="Biol. Reprod.">
        <title>Identification of twelve O-glycosylation sites in equine chorionic gonadotropin beta and equine luteinizing hormone beta by solid-phase Edman degradation.</title>
        <authorList>
            <person name="Bousfield G.R."/>
            <person name="Butnev V.Y."/>
            <person name="Butnev V.Y."/>
        </authorList>
    </citation>
    <scope>GLYCOSYLATION AT SER-138; SER-143; THR-147; SER-148; THR-149; SER-150; THR-151; THR-153; SER-157; SER-160; SER-161 AND SER-169</scope>
</reference>
<comment type="function">
    <text>Promotes spermatogenesis and ovulation by stimulating the testes and ovaries to synthesize steroids.</text>
</comment>
<comment type="subunit">
    <text>Heterodimer of a common alpha chain and a unique beta chain which confers biological specificity to thyrotropin, lutropin, follitropin and gonadotropin.</text>
</comment>
<comment type="subcellular location">
    <subcellularLocation>
        <location>Secreted</location>
    </subcellularLocation>
</comment>
<comment type="PTM">
    <text evidence="3">Microheterogeneity at Asn-33. O-glycosylation appears to be responsible for the beta subunit contribution to the difference in LH-receptor binding activity between LSH-B and CG-B.</text>
</comment>
<comment type="similarity">
    <text evidence="6">Belongs to the glycoprotein hormones subunit beta family.</text>
</comment>
<name>LSHB_HORSE</name>
<accession>P08751</accession>
<accession>P01234</accession>
<proteinExistence type="evidence at protein level"/>
<evidence type="ECO:0000250" key="1"/>
<evidence type="ECO:0000256" key="2">
    <source>
        <dbReference type="SAM" id="MobiDB-lite"/>
    </source>
</evidence>
<evidence type="ECO:0000269" key="3">
    <source>
    </source>
</evidence>
<evidence type="ECO:0000269" key="4">
    <source>
    </source>
</evidence>
<evidence type="ECO:0000269" key="5">
    <source>
    </source>
</evidence>
<evidence type="ECO:0000305" key="6"/>